<comment type="subcellular location">
    <subcellularLocation>
        <location evidence="2">Endoplasmic reticulum</location>
    </subcellularLocation>
    <subcellularLocation>
        <location evidence="1">Membrane</location>
        <topology evidence="1">Multi-pass membrane protein</topology>
    </subcellularLocation>
</comment>
<comment type="similarity">
    <text evidence="1">Belongs to the major facilitator superfamily. Allantoate permease family.</text>
</comment>
<name>YHDC_SCHPO</name>
<reference evidence="4" key="1">
    <citation type="journal article" date="2002" name="Nature">
        <title>The genome sequence of Schizosaccharomyces pombe.</title>
        <authorList>
            <person name="Wood V."/>
            <person name="Gwilliam R."/>
            <person name="Rajandream M.A."/>
            <person name="Lyne M.H."/>
            <person name="Lyne R."/>
            <person name="Stewart A."/>
            <person name="Sgouros J.G."/>
            <person name="Peat N."/>
            <person name="Hayles J."/>
            <person name="Baker S.G."/>
            <person name="Basham D."/>
            <person name="Bowman S."/>
            <person name="Brooks K."/>
            <person name="Brown D."/>
            <person name="Brown S."/>
            <person name="Chillingworth T."/>
            <person name="Churcher C.M."/>
            <person name="Collins M."/>
            <person name="Connor R."/>
            <person name="Cronin A."/>
            <person name="Davis P."/>
            <person name="Feltwell T."/>
            <person name="Fraser A."/>
            <person name="Gentles S."/>
            <person name="Goble A."/>
            <person name="Hamlin N."/>
            <person name="Harris D.E."/>
            <person name="Hidalgo J."/>
            <person name="Hodgson G."/>
            <person name="Holroyd S."/>
            <person name="Hornsby T."/>
            <person name="Howarth S."/>
            <person name="Huckle E.J."/>
            <person name="Hunt S."/>
            <person name="Jagels K."/>
            <person name="James K.D."/>
            <person name="Jones L."/>
            <person name="Jones M."/>
            <person name="Leather S."/>
            <person name="McDonald S."/>
            <person name="McLean J."/>
            <person name="Mooney P."/>
            <person name="Moule S."/>
            <person name="Mungall K.L."/>
            <person name="Murphy L.D."/>
            <person name="Niblett D."/>
            <person name="Odell C."/>
            <person name="Oliver K."/>
            <person name="O'Neil S."/>
            <person name="Pearson D."/>
            <person name="Quail M.A."/>
            <person name="Rabbinowitsch E."/>
            <person name="Rutherford K.M."/>
            <person name="Rutter S."/>
            <person name="Saunders D."/>
            <person name="Seeger K."/>
            <person name="Sharp S."/>
            <person name="Skelton J."/>
            <person name="Simmonds M.N."/>
            <person name="Squares R."/>
            <person name="Squares S."/>
            <person name="Stevens K."/>
            <person name="Taylor K."/>
            <person name="Taylor R.G."/>
            <person name="Tivey A."/>
            <person name="Walsh S.V."/>
            <person name="Warren T."/>
            <person name="Whitehead S."/>
            <person name="Woodward J.R."/>
            <person name="Volckaert G."/>
            <person name="Aert R."/>
            <person name="Robben J."/>
            <person name="Grymonprez B."/>
            <person name="Weltjens I."/>
            <person name="Vanstreels E."/>
            <person name="Rieger M."/>
            <person name="Schaefer M."/>
            <person name="Mueller-Auer S."/>
            <person name="Gabel C."/>
            <person name="Fuchs M."/>
            <person name="Duesterhoeft A."/>
            <person name="Fritzc C."/>
            <person name="Holzer E."/>
            <person name="Moestl D."/>
            <person name="Hilbert H."/>
            <person name="Borzym K."/>
            <person name="Langer I."/>
            <person name="Beck A."/>
            <person name="Lehrach H."/>
            <person name="Reinhardt R."/>
            <person name="Pohl T.M."/>
            <person name="Eger P."/>
            <person name="Zimmermann W."/>
            <person name="Wedler H."/>
            <person name="Wambutt R."/>
            <person name="Purnelle B."/>
            <person name="Goffeau A."/>
            <person name="Cadieu E."/>
            <person name="Dreano S."/>
            <person name="Gloux S."/>
            <person name="Lelaure V."/>
            <person name="Mottier S."/>
            <person name="Galibert F."/>
            <person name="Aves S.J."/>
            <person name="Xiang Z."/>
            <person name="Hunt C."/>
            <person name="Moore K."/>
            <person name="Hurst S.M."/>
            <person name="Lucas M."/>
            <person name="Rochet M."/>
            <person name="Gaillardin C."/>
            <person name="Tallada V.A."/>
            <person name="Garzon A."/>
            <person name="Thode G."/>
            <person name="Daga R.R."/>
            <person name="Cruzado L."/>
            <person name="Jimenez J."/>
            <person name="Sanchez M."/>
            <person name="del Rey F."/>
            <person name="Benito J."/>
            <person name="Dominguez A."/>
            <person name="Revuelta J.L."/>
            <person name="Moreno S."/>
            <person name="Armstrong J."/>
            <person name="Forsburg S.L."/>
            <person name="Cerutti L."/>
            <person name="Lowe T."/>
            <person name="McCombie W.R."/>
            <person name="Paulsen I."/>
            <person name="Potashkin J."/>
            <person name="Shpakovski G.V."/>
            <person name="Ussery D."/>
            <person name="Barrell B.G."/>
            <person name="Nurse P."/>
        </authorList>
    </citation>
    <scope>NUCLEOTIDE SEQUENCE [LARGE SCALE GENOMIC DNA]</scope>
    <source>
        <strain>972 / ATCC 24843</strain>
    </source>
</reference>
<reference evidence="3" key="2">
    <citation type="journal article" date="2006" name="Nat. Biotechnol.">
        <title>ORFeome cloning and global analysis of protein localization in the fission yeast Schizosaccharomyces pombe.</title>
        <authorList>
            <person name="Matsuyama A."/>
            <person name="Arai R."/>
            <person name="Yashiroda Y."/>
            <person name="Shirai A."/>
            <person name="Kamata A."/>
            <person name="Sekido S."/>
            <person name="Kobayashi Y."/>
            <person name="Hashimoto A."/>
            <person name="Hamamoto M."/>
            <person name="Hiraoka Y."/>
            <person name="Horinouchi S."/>
            <person name="Yoshida M."/>
        </authorList>
    </citation>
    <scope>SUBCELLULAR LOCATION [LARGE SCALE ANALYSIS]</scope>
</reference>
<protein>
    <recommendedName>
        <fullName>Uncharacterized transporter C1683.12</fullName>
    </recommendedName>
</protein>
<proteinExistence type="inferred from homology"/>
<organism>
    <name type="scientific">Schizosaccharomyces pombe (strain 972 / ATCC 24843)</name>
    <name type="common">Fission yeast</name>
    <dbReference type="NCBI Taxonomy" id="284812"/>
    <lineage>
        <taxon>Eukaryota</taxon>
        <taxon>Fungi</taxon>
        <taxon>Dikarya</taxon>
        <taxon>Ascomycota</taxon>
        <taxon>Taphrinomycotina</taxon>
        <taxon>Schizosaccharomycetes</taxon>
        <taxon>Schizosaccharomycetales</taxon>
        <taxon>Schizosaccharomycetaceae</taxon>
        <taxon>Schizosaccharomyces</taxon>
    </lineage>
</organism>
<evidence type="ECO:0000255" key="1"/>
<evidence type="ECO:0000269" key="2">
    <source>
    </source>
</evidence>
<evidence type="ECO:0000305" key="3"/>
<evidence type="ECO:0000312" key="4">
    <source>
        <dbReference type="EMBL" id="CAB91174.1"/>
    </source>
</evidence>
<accession>Q9P6J0</accession>
<gene>
    <name type="ORF">SPBC1683.12</name>
</gene>
<feature type="chain" id="PRO_0000372721" description="Uncharacterized transporter C1683.12">
    <location>
        <begin position="1"/>
        <end position="482"/>
    </location>
</feature>
<feature type="transmembrane region" description="Helical" evidence="1">
    <location>
        <begin position="40"/>
        <end position="57"/>
    </location>
</feature>
<feature type="transmembrane region" description="Helical" evidence="1">
    <location>
        <begin position="83"/>
        <end position="103"/>
    </location>
</feature>
<feature type="transmembrane region" description="Helical" evidence="1">
    <location>
        <begin position="109"/>
        <end position="129"/>
    </location>
</feature>
<feature type="transmembrane region" description="Helical" evidence="1">
    <location>
        <begin position="140"/>
        <end position="160"/>
    </location>
</feature>
<feature type="transmembrane region" description="Helical" evidence="1">
    <location>
        <begin position="170"/>
        <end position="190"/>
    </location>
</feature>
<feature type="transmembrane region" description="Helical" evidence="1">
    <location>
        <begin position="205"/>
        <end position="225"/>
    </location>
</feature>
<feature type="transmembrane region" description="Helical" evidence="1">
    <location>
        <begin position="278"/>
        <end position="298"/>
    </location>
</feature>
<feature type="transmembrane region" description="Helical" evidence="1">
    <location>
        <begin position="311"/>
        <end position="331"/>
    </location>
</feature>
<feature type="transmembrane region" description="Helical" evidence="1">
    <location>
        <begin position="338"/>
        <end position="358"/>
    </location>
</feature>
<feature type="transmembrane region" description="Helical" evidence="1">
    <location>
        <begin position="366"/>
        <end position="386"/>
    </location>
</feature>
<feature type="transmembrane region" description="Helical" evidence="1">
    <location>
        <begin position="399"/>
        <end position="418"/>
    </location>
</feature>
<feature type="transmembrane region" description="Helical" evidence="1">
    <location>
        <begin position="428"/>
        <end position="448"/>
    </location>
</feature>
<sequence>MSTMEEEKVISKSTSVDISEGTFDDITIEKKEEAKLVRKLDWYLMPMFSVLYFLSFLDRANIGNAAVVGLKEDLKLQAYQYSAAVSVFYATYITAETPSVLLVKKFGPHYYLSAMIIGWSLVTIFTCFVRHYWSLVLTRLLLGICEGGFFPCLSLYISMTYKREEQGKRLAYLYVCSCFSGAFGGLIATGLTKIPKSSGLPNWGWLYIIEGLISAISALWILFCLPDDPSTARFLNPREKELMKIRAEQRQKYMGSPNFDWTQFRKAFKDPKMYMSCVIQFCQDLVLYGISTFLPSILKLELGYSSLAAQYMSVPVYALGGISVYVICLLSDRTNIRGWFIIGMNFFGLAGFIILLATTNSAANYVATYLIALPLYPTVALNITWINNNMAPHYRRATALGCNQTIGNLAGVIAGQVYRSSPYKLGHGFALGCTVVGTLTATAMRFYLQRQNKIKQEILNGERVDEKKERDGCDALDFVYVL</sequence>
<keyword id="KW-0256">Endoplasmic reticulum</keyword>
<keyword id="KW-0472">Membrane</keyword>
<keyword id="KW-1185">Reference proteome</keyword>
<keyword id="KW-0812">Transmembrane</keyword>
<keyword id="KW-1133">Transmembrane helix</keyword>
<keyword id="KW-0813">Transport</keyword>
<dbReference type="EMBL" id="CU329671">
    <property type="protein sequence ID" value="CAB91174.1"/>
    <property type="molecule type" value="Genomic_DNA"/>
</dbReference>
<dbReference type="RefSeq" id="NP_595068.1">
    <property type="nucleotide sequence ID" value="NM_001020974.2"/>
</dbReference>
<dbReference type="SMR" id="Q9P6J0"/>
<dbReference type="BioGRID" id="276455">
    <property type="interactions" value="1"/>
</dbReference>
<dbReference type="FunCoup" id="Q9P6J0">
    <property type="interactions" value="96"/>
</dbReference>
<dbReference type="STRING" id="284812.Q9P6J0"/>
<dbReference type="iPTMnet" id="Q9P6J0"/>
<dbReference type="PaxDb" id="4896-SPBC1683.12.1"/>
<dbReference type="EnsemblFungi" id="SPBC1683.12.1">
    <property type="protein sequence ID" value="SPBC1683.12.1:pep"/>
    <property type="gene ID" value="SPBC1683.12"/>
</dbReference>
<dbReference type="KEGG" id="spo:2539910"/>
<dbReference type="PomBase" id="SPBC1683.12"/>
<dbReference type="VEuPathDB" id="FungiDB:SPBC1683.12"/>
<dbReference type="eggNOG" id="KOG2533">
    <property type="taxonomic scope" value="Eukaryota"/>
</dbReference>
<dbReference type="HOGENOM" id="CLU_001265_0_1_1"/>
<dbReference type="InParanoid" id="Q9P6J0"/>
<dbReference type="OMA" id="QRRKYMG"/>
<dbReference type="PhylomeDB" id="Q9P6J0"/>
<dbReference type="PRO" id="PR:Q9P6J0"/>
<dbReference type="Proteomes" id="UP000002485">
    <property type="component" value="Chromosome II"/>
</dbReference>
<dbReference type="GO" id="GO:0005783">
    <property type="term" value="C:endoplasmic reticulum"/>
    <property type="evidence" value="ECO:0007005"/>
    <property type="project" value="PomBase"/>
</dbReference>
<dbReference type="GO" id="GO:0016020">
    <property type="term" value="C:membrane"/>
    <property type="evidence" value="ECO:0000318"/>
    <property type="project" value="GO_Central"/>
</dbReference>
<dbReference type="GO" id="GO:0005886">
    <property type="term" value="C:plasma membrane"/>
    <property type="evidence" value="ECO:0000266"/>
    <property type="project" value="PomBase"/>
</dbReference>
<dbReference type="GO" id="GO:0046943">
    <property type="term" value="F:carboxylic acid transmembrane transporter activity"/>
    <property type="evidence" value="ECO:0000266"/>
    <property type="project" value="PomBase"/>
</dbReference>
<dbReference type="GO" id="GO:0022857">
    <property type="term" value="F:transmembrane transporter activity"/>
    <property type="evidence" value="ECO:0000318"/>
    <property type="project" value="GO_Central"/>
</dbReference>
<dbReference type="GO" id="GO:1905039">
    <property type="term" value="P:carboxylic acid transmembrane transport"/>
    <property type="evidence" value="ECO:0000266"/>
    <property type="project" value="PomBase"/>
</dbReference>
<dbReference type="CDD" id="cd17327">
    <property type="entry name" value="MFS_FEN2_like"/>
    <property type="match status" value="1"/>
</dbReference>
<dbReference type="FunFam" id="1.20.1250.20:FF:000068">
    <property type="entry name" value="MFS general substrate transporter"/>
    <property type="match status" value="1"/>
</dbReference>
<dbReference type="FunFam" id="1.20.1250.20:FF:000018">
    <property type="entry name" value="MFS transporter permease"/>
    <property type="match status" value="1"/>
</dbReference>
<dbReference type="Gene3D" id="1.20.1250.20">
    <property type="entry name" value="MFS general substrate transporter like domains"/>
    <property type="match status" value="2"/>
</dbReference>
<dbReference type="InterPro" id="IPR011701">
    <property type="entry name" value="MFS"/>
</dbReference>
<dbReference type="InterPro" id="IPR020846">
    <property type="entry name" value="MFS_dom"/>
</dbReference>
<dbReference type="InterPro" id="IPR036259">
    <property type="entry name" value="MFS_trans_sf"/>
</dbReference>
<dbReference type="PANTHER" id="PTHR43791:SF24">
    <property type="entry name" value="NICOTINIC ACID PLASMA MEMBRANE TRANSPORTER"/>
    <property type="match status" value="1"/>
</dbReference>
<dbReference type="PANTHER" id="PTHR43791">
    <property type="entry name" value="PERMEASE-RELATED"/>
    <property type="match status" value="1"/>
</dbReference>
<dbReference type="Pfam" id="PF07690">
    <property type="entry name" value="MFS_1"/>
    <property type="match status" value="1"/>
</dbReference>
<dbReference type="SUPFAM" id="SSF103473">
    <property type="entry name" value="MFS general substrate transporter"/>
    <property type="match status" value="1"/>
</dbReference>
<dbReference type="PROSITE" id="PS50850">
    <property type="entry name" value="MFS"/>
    <property type="match status" value="1"/>
</dbReference>